<comment type="function">
    <text evidence="1">The GINS complex plays an essential role in the initiation of DNA replication. Has a role in chromosome segregation (By similarity).</text>
</comment>
<comment type="subunit">
    <text evidence="1">Component of the GINS complex which is a heterotetramer of sld5, psf1, psf2 and psf3.</text>
</comment>
<comment type="subcellular location">
    <subcellularLocation>
        <location evidence="1">Nucleus</location>
    </subcellularLocation>
</comment>
<comment type="similarity">
    <text evidence="3">Belongs to the GINS2/PSF2 family.</text>
</comment>
<reference key="1">
    <citation type="journal article" date="2005" name="Nature">
        <title>Genome sequencing and analysis of Aspergillus oryzae.</title>
        <authorList>
            <person name="Machida M."/>
            <person name="Asai K."/>
            <person name="Sano M."/>
            <person name="Tanaka T."/>
            <person name="Kumagai T."/>
            <person name="Terai G."/>
            <person name="Kusumoto K."/>
            <person name="Arima T."/>
            <person name="Akita O."/>
            <person name="Kashiwagi Y."/>
            <person name="Abe K."/>
            <person name="Gomi K."/>
            <person name="Horiuchi H."/>
            <person name="Kitamoto K."/>
            <person name="Kobayashi T."/>
            <person name="Takeuchi M."/>
            <person name="Denning D.W."/>
            <person name="Galagan J.E."/>
            <person name="Nierman W.C."/>
            <person name="Yu J."/>
            <person name="Archer D.B."/>
            <person name="Bennett J.W."/>
            <person name="Bhatnagar D."/>
            <person name="Cleveland T.E."/>
            <person name="Fedorova N.D."/>
            <person name="Gotoh O."/>
            <person name="Horikawa H."/>
            <person name="Hosoyama A."/>
            <person name="Ichinomiya M."/>
            <person name="Igarashi R."/>
            <person name="Iwashita K."/>
            <person name="Juvvadi P.R."/>
            <person name="Kato M."/>
            <person name="Kato Y."/>
            <person name="Kin T."/>
            <person name="Kokubun A."/>
            <person name="Maeda H."/>
            <person name="Maeyama N."/>
            <person name="Maruyama J."/>
            <person name="Nagasaki H."/>
            <person name="Nakajima T."/>
            <person name="Oda K."/>
            <person name="Okada K."/>
            <person name="Paulsen I."/>
            <person name="Sakamoto K."/>
            <person name="Sawano T."/>
            <person name="Takahashi M."/>
            <person name="Takase K."/>
            <person name="Terabayashi Y."/>
            <person name="Wortman J.R."/>
            <person name="Yamada O."/>
            <person name="Yamagata Y."/>
            <person name="Anazawa H."/>
            <person name="Hata Y."/>
            <person name="Koide Y."/>
            <person name="Komori T."/>
            <person name="Koyama Y."/>
            <person name="Minetoki T."/>
            <person name="Suharnan S."/>
            <person name="Tanaka A."/>
            <person name="Isono K."/>
            <person name="Kuhara S."/>
            <person name="Ogasawara N."/>
            <person name="Kikuchi H."/>
        </authorList>
    </citation>
    <scope>NUCLEOTIDE SEQUENCE [LARGE SCALE GENOMIC DNA]</scope>
    <source>
        <strain>ATCC 42149 / RIB 40</strain>
    </source>
</reference>
<dbReference type="EMBL" id="BA000051">
    <property type="protein sequence ID" value="BAE59979.1"/>
    <property type="molecule type" value="Genomic_DNA"/>
</dbReference>
<dbReference type="RefSeq" id="XP_001821981.1">
    <property type="nucleotide sequence ID" value="XM_001821929.2"/>
</dbReference>
<dbReference type="SMR" id="Q2UEN6"/>
<dbReference type="STRING" id="510516.Q2UEN6"/>
<dbReference type="EnsemblFungi" id="BAE59979">
    <property type="protein sequence ID" value="BAE59979"/>
    <property type="gene ID" value="AO090026000549"/>
</dbReference>
<dbReference type="GeneID" id="5994009"/>
<dbReference type="KEGG" id="aor:AO090026000549"/>
<dbReference type="VEuPathDB" id="FungiDB:AO090026000549"/>
<dbReference type="HOGENOM" id="CLU_078274_0_0_1"/>
<dbReference type="OMA" id="DSLNCMY"/>
<dbReference type="OrthoDB" id="127905at5052"/>
<dbReference type="Proteomes" id="UP000006564">
    <property type="component" value="Chromosome 3"/>
</dbReference>
<dbReference type="GO" id="GO:0000811">
    <property type="term" value="C:GINS complex"/>
    <property type="evidence" value="ECO:0007669"/>
    <property type="project" value="TreeGrafter"/>
</dbReference>
<dbReference type="GO" id="GO:0007059">
    <property type="term" value="P:chromosome segregation"/>
    <property type="evidence" value="ECO:0007669"/>
    <property type="project" value="UniProtKB-KW"/>
</dbReference>
<dbReference type="GO" id="GO:0006260">
    <property type="term" value="P:DNA replication"/>
    <property type="evidence" value="ECO:0007669"/>
    <property type="project" value="UniProtKB-KW"/>
</dbReference>
<dbReference type="GO" id="GO:0000727">
    <property type="term" value="P:double-strand break repair via break-induced replication"/>
    <property type="evidence" value="ECO:0007669"/>
    <property type="project" value="TreeGrafter"/>
</dbReference>
<dbReference type="CDD" id="cd11712">
    <property type="entry name" value="GINS_A_psf2"/>
    <property type="match status" value="1"/>
</dbReference>
<dbReference type="CDD" id="cd21694">
    <property type="entry name" value="GINS_B_Psf2"/>
    <property type="match status" value="1"/>
</dbReference>
<dbReference type="FunFam" id="1.20.58.1020:FF:000001">
    <property type="entry name" value="DNA replication complex GINS protein PSF2"/>
    <property type="match status" value="1"/>
</dbReference>
<dbReference type="FunFam" id="3.40.5.50:FF:000001">
    <property type="entry name" value="DNA replication complex GINS protein PSF2"/>
    <property type="match status" value="1"/>
</dbReference>
<dbReference type="Gene3D" id="1.20.58.1020">
    <property type="match status" value="1"/>
</dbReference>
<dbReference type="Gene3D" id="3.40.5.50">
    <property type="match status" value="1"/>
</dbReference>
<dbReference type="InterPro" id="IPR021151">
    <property type="entry name" value="GINS_A"/>
</dbReference>
<dbReference type="InterPro" id="IPR036224">
    <property type="entry name" value="GINS_bundle-like_dom_sf"/>
</dbReference>
<dbReference type="InterPro" id="IPR007257">
    <property type="entry name" value="GINS_Psf2"/>
</dbReference>
<dbReference type="InterPro" id="IPR056784">
    <property type="entry name" value="PSF2_N"/>
</dbReference>
<dbReference type="PANTHER" id="PTHR12772">
    <property type="entry name" value="DNA REPLICATION COMPLEX GINS PROTEIN PSF2"/>
    <property type="match status" value="1"/>
</dbReference>
<dbReference type="PANTHER" id="PTHR12772:SF0">
    <property type="entry name" value="DNA REPLICATION COMPLEX GINS PROTEIN PSF2"/>
    <property type="match status" value="1"/>
</dbReference>
<dbReference type="Pfam" id="PF25005">
    <property type="entry name" value="PSF2_N"/>
    <property type="match status" value="1"/>
</dbReference>
<dbReference type="Pfam" id="PF05916">
    <property type="entry name" value="Sld5"/>
    <property type="match status" value="1"/>
</dbReference>
<dbReference type="PIRSF" id="PIRSF028998">
    <property type="entry name" value="GINS_Psf2_subgr"/>
    <property type="match status" value="1"/>
</dbReference>
<dbReference type="SUPFAM" id="SSF158573">
    <property type="entry name" value="GINS helical bundle-like"/>
    <property type="match status" value="1"/>
</dbReference>
<dbReference type="SUPFAM" id="SSF160059">
    <property type="entry name" value="PriA/YqbF domain"/>
    <property type="match status" value="1"/>
</dbReference>
<evidence type="ECO:0000250" key="1"/>
<evidence type="ECO:0000256" key="2">
    <source>
        <dbReference type="SAM" id="MobiDB-lite"/>
    </source>
</evidence>
<evidence type="ECO:0000305" key="3"/>
<name>PSF2_ASPOR</name>
<proteinExistence type="inferred from homology"/>
<accession>Q2UEN6</accession>
<sequence length="269" mass="29544">MAFPLPRGITPPEISFLAEMEMVTILPRQRLEGLELLGGPVEPLLPPRRASLPLWLALLLKRQRRANILPPPWLHPESLSLILEIETQHHEYQHAFSPPPPLPGQPSLRDRGKRPVAMPRYTPDGGRYYPAPPFLPQNVAQDHVPSGEPPSLPFHWLEVGTMLLDAASDDLVDPDQTRRLLKELREVRTAKIRSGVDVLDAASTGGGGVALTGVGAMEVGEGRGFIAGVVDGLRKIGASKEQARREQMAEDMANGGYDATQDDDDDMEF</sequence>
<protein>
    <recommendedName>
        <fullName>DNA replication complex GINS protein psf2</fullName>
    </recommendedName>
</protein>
<organism>
    <name type="scientific">Aspergillus oryzae (strain ATCC 42149 / RIB 40)</name>
    <name type="common">Yellow koji mold</name>
    <dbReference type="NCBI Taxonomy" id="510516"/>
    <lineage>
        <taxon>Eukaryota</taxon>
        <taxon>Fungi</taxon>
        <taxon>Dikarya</taxon>
        <taxon>Ascomycota</taxon>
        <taxon>Pezizomycotina</taxon>
        <taxon>Eurotiomycetes</taxon>
        <taxon>Eurotiomycetidae</taxon>
        <taxon>Eurotiales</taxon>
        <taxon>Aspergillaceae</taxon>
        <taxon>Aspergillus</taxon>
        <taxon>Aspergillus subgen. Circumdati</taxon>
    </lineage>
</organism>
<keyword id="KW-0159">Chromosome partition</keyword>
<keyword id="KW-0235">DNA replication</keyword>
<keyword id="KW-0539">Nucleus</keyword>
<keyword id="KW-1185">Reference proteome</keyword>
<gene>
    <name type="primary">psf2</name>
    <name type="ORF">AO090026000549</name>
</gene>
<feature type="chain" id="PRO_0000278408" description="DNA replication complex GINS protein psf2">
    <location>
        <begin position="1"/>
        <end position="269"/>
    </location>
</feature>
<feature type="region of interest" description="Disordered" evidence="2">
    <location>
        <begin position="92"/>
        <end position="112"/>
    </location>
</feature>
<feature type="region of interest" description="Disordered" evidence="2">
    <location>
        <begin position="241"/>
        <end position="269"/>
    </location>
</feature>
<feature type="compositionally biased region" description="Acidic residues" evidence="2">
    <location>
        <begin position="260"/>
        <end position="269"/>
    </location>
</feature>